<organism>
    <name type="scientific">Campylobacter jejuni subsp. jejuni serotype O:23/36 (strain 81-176)</name>
    <dbReference type="NCBI Taxonomy" id="354242"/>
    <lineage>
        <taxon>Bacteria</taxon>
        <taxon>Pseudomonadati</taxon>
        <taxon>Campylobacterota</taxon>
        <taxon>Epsilonproteobacteria</taxon>
        <taxon>Campylobacterales</taxon>
        <taxon>Campylobacteraceae</taxon>
        <taxon>Campylobacter</taxon>
    </lineage>
</organism>
<reference key="1">
    <citation type="submission" date="2005-07" db="EMBL/GenBank/DDBJ databases">
        <title>Onset time as an objective parameter for evaluating AI-2 activity in the Vibrio harveyi bioluminescence assay.</title>
        <authorList>
            <person name="Chen C.-Y."/>
            <person name="Irwin P.L."/>
        </authorList>
    </citation>
    <scope>NUCLEOTIDE SEQUENCE [GENOMIC DNA]</scope>
</reference>
<reference key="2">
    <citation type="submission" date="2006-12" db="EMBL/GenBank/DDBJ databases">
        <authorList>
            <person name="Fouts D.E."/>
            <person name="Nelson K.E."/>
            <person name="Sebastian Y."/>
        </authorList>
    </citation>
    <scope>NUCLEOTIDE SEQUENCE [LARGE SCALE GENOMIC DNA]</scope>
    <source>
        <strain>81-176</strain>
    </source>
</reference>
<name>LUXS_CAMJJ</name>
<comment type="function">
    <text evidence="1">Involved in the synthesis of autoinducer 2 (AI-2) which is secreted by bacteria and is used to communicate both the cell density and the metabolic potential of the environment. The regulation of gene expression in response to changes in cell density is called quorum sensing. Catalyzes the transformation of S-ribosylhomocysteine (RHC) to homocysteine (HC) and 4,5-dihydroxy-2,3-pentadione (DPD).</text>
</comment>
<comment type="catalytic activity">
    <reaction evidence="1">
        <text>S-(5-deoxy-D-ribos-5-yl)-L-homocysteine = (S)-4,5-dihydroxypentane-2,3-dione + L-homocysteine</text>
        <dbReference type="Rhea" id="RHEA:17753"/>
        <dbReference type="ChEBI" id="CHEBI:29484"/>
        <dbReference type="ChEBI" id="CHEBI:58195"/>
        <dbReference type="ChEBI" id="CHEBI:58199"/>
        <dbReference type="EC" id="4.4.1.21"/>
    </reaction>
</comment>
<comment type="cofactor">
    <cofactor evidence="1">
        <name>Fe cation</name>
        <dbReference type="ChEBI" id="CHEBI:24875"/>
    </cofactor>
    <text evidence="1">Binds 1 Fe cation per subunit.</text>
</comment>
<comment type="subunit">
    <text evidence="1">Homodimer.</text>
</comment>
<comment type="similarity">
    <text evidence="1">Belongs to the LuxS family.</text>
</comment>
<gene>
    <name evidence="1" type="primary">luxS</name>
    <name type="ordered locus">CJJ81176_1213</name>
</gene>
<accession>Q3I354</accession>
<feature type="chain" id="PRO_0000297988" description="S-ribosylhomocysteine lyase">
    <location>
        <begin position="1"/>
        <end position="164"/>
    </location>
</feature>
<feature type="binding site" evidence="1">
    <location>
        <position position="54"/>
    </location>
    <ligand>
        <name>Fe cation</name>
        <dbReference type="ChEBI" id="CHEBI:24875"/>
    </ligand>
</feature>
<feature type="binding site" evidence="1">
    <location>
        <position position="58"/>
    </location>
    <ligand>
        <name>Fe cation</name>
        <dbReference type="ChEBI" id="CHEBI:24875"/>
    </ligand>
</feature>
<feature type="binding site" evidence="1">
    <location>
        <position position="128"/>
    </location>
    <ligand>
        <name>Fe cation</name>
        <dbReference type="ChEBI" id="CHEBI:24875"/>
    </ligand>
</feature>
<dbReference type="EC" id="4.4.1.21" evidence="1"/>
<dbReference type="EMBL" id="DQ143940">
    <property type="protein sequence ID" value="ABA26840.1"/>
    <property type="molecule type" value="Genomic_DNA"/>
</dbReference>
<dbReference type="EMBL" id="CP000538">
    <property type="protein sequence ID" value="EAQ72038.1"/>
    <property type="molecule type" value="Genomic_DNA"/>
</dbReference>
<dbReference type="RefSeq" id="WP_002868865.1">
    <property type="nucleotide sequence ID" value="NC_008787.1"/>
</dbReference>
<dbReference type="SMR" id="Q3I354"/>
<dbReference type="KEGG" id="cjj:CJJ81176_1213"/>
<dbReference type="eggNOG" id="COG1854">
    <property type="taxonomic scope" value="Bacteria"/>
</dbReference>
<dbReference type="HOGENOM" id="CLU_107531_2_0_7"/>
<dbReference type="BRENDA" id="4.4.1.21">
    <property type="organism ID" value="1087"/>
</dbReference>
<dbReference type="Proteomes" id="UP000000646">
    <property type="component" value="Chromosome"/>
</dbReference>
<dbReference type="GO" id="GO:0005506">
    <property type="term" value="F:iron ion binding"/>
    <property type="evidence" value="ECO:0007669"/>
    <property type="project" value="InterPro"/>
</dbReference>
<dbReference type="GO" id="GO:0043768">
    <property type="term" value="F:S-ribosylhomocysteine lyase activity"/>
    <property type="evidence" value="ECO:0007669"/>
    <property type="project" value="UniProtKB-UniRule"/>
</dbReference>
<dbReference type="GO" id="GO:0009372">
    <property type="term" value="P:quorum sensing"/>
    <property type="evidence" value="ECO:0007669"/>
    <property type="project" value="UniProtKB-UniRule"/>
</dbReference>
<dbReference type="Gene3D" id="3.30.1360.80">
    <property type="entry name" value="S-ribosylhomocysteinase (LuxS)"/>
    <property type="match status" value="1"/>
</dbReference>
<dbReference type="HAMAP" id="MF_00091">
    <property type="entry name" value="LuxS"/>
    <property type="match status" value="1"/>
</dbReference>
<dbReference type="InterPro" id="IPR037005">
    <property type="entry name" value="LuxS_sf"/>
</dbReference>
<dbReference type="InterPro" id="IPR011249">
    <property type="entry name" value="Metalloenz_LuxS/M16"/>
</dbReference>
<dbReference type="InterPro" id="IPR003815">
    <property type="entry name" value="S-ribosylhomocysteinase"/>
</dbReference>
<dbReference type="NCBIfam" id="NF002602">
    <property type="entry name" value="PRK02260.1-2"/>
    <property type="match status" value="1"/>
</dbReference>
<dbReference type="PANTHER" id="PTHR35799">
    <property type="entry name" value="S-RIBOSYLHOMOCYSTEINE LYASE"/>
    <property type="match status" value="1"/>
</dbReference>
<dbReference type="PANTHER" id="PTHR35799:SF1">
    <property type="entry name" value="S-RIBOSYLHOMOCYSTEINE LYASE"/>
    <property type="match status" value="1"/>
</dbReference>
<dbReference type="Pfam" id="PF02664">
    <property type="entry name" value="LuxS"/>
    <property type="match status" value="1"/>
</dbReference>
<dbReference type="PIRSF" id="PIRSF006160">
    <property type="entry name" value="AI2"/>
    <property type="match status" value="1"/>
</dbReference>
<dbReference type="PRINTS" id="PR01487">
    <property type="entry name" value="LUXSPROTEIN"/>
</dbReference>
<dbReference type="SUPFAM" id="SSF63411">
    <property type="entry name" value="LuxS/MPP-like metallohydrolase"/>
    <property type="match status" value="1"/>
</dbReference>
<keyword id="KW-0071">Autoinducer synthesis</keyword>
<keyword id="KW-0408">Iron</keyword>
<keyword id="KW-0456">Lyase</keyword>
<keyword id="KW-0479">Metal-binding</keyword>
<keyword id="KW-0673">Quorum sensing</keyword>
<evidence type="ECO:0000255" key="1">
    <source>
        <dbReference type="HAMAP-Rule" id="MF_00091"/>
    </source>
</evidence>
<protein>
    <recommendedName>
        <fullName evidence="1">S-ribosylhomocysteine lyase</fullName>
        <ecNumber evidence="1">4.4.1.21</ecNumber>
    </recommendedName>
    <alternativeName>
        <fullName evidence="1">AI-2 synthesis protein</fullName>
    </alternativeName>
    <alternativeName>
        <fullName evidence="1">Autoinducer-2 production protein LuxS</fullName>
    </alternativeName>
</protein>
<proteinExistence type="inferred from homology"/>
<sequence>MPLLDSFKVNHTKMPAPAVRLAKVMKTPKGDDISVFDLRFCVPNKDIMSEKGTHTLEHLFAGFMRDHLNSDSVEIIDISPMGCRTGFYMSLIGTPDEKSVAKAWEEAMKDVLSVSDQSKIPELNIYQCGTCAMHSLDEAKQIAQKVLNLGISIMNNKELKLENA</sequence>